<name>DER_KARMG</name>
<accession>A8Z608</accession>
<gene>
    <name evidence="1" type="primary">der</name>
    <name type="synonym">engA</name>
    <name type="ordered locus">SMGWSS_151</name>
</gene>
<keyword id="KW-0342">GTP-binding</keyword>
<keyword id="KW-0547">Nucleotide-binding</keyword>
<keyword id="KW-0677">Repeat</keyword>
<keyword id="KW-0690">Ribosome biogenesis</keyword>
<proteinExistence type="inferred from homology"/>
<sequence length="433" mass="49789">MTKIVSIVGRPNVGKSTLFNRIIGYKKSIVNSKSGITRDRNYGFCNWNGIEFCLIDTGGYTNESKNIFDKKICEQFLFALAESDVILFLVDPSNDILGIDYDISKRIRKLKKSIYLVINKIDIYKNIYNTYKYCKFGITKTYCISSINGTGTEKLLDSIVSNFDKNIKIYKKNIPRIAIVGRPNVGKSTLINTLLNKNKNIVTNISGTTRDSIDVLYSKFGIECILVDTAGIRKKKNIKEDIEFYSVMRAIKSIQNSDVSLLIIDSKSGFESQDINIFKIIENNNKGIVLLINKWDIFNNNYLINSYENKIKKIIAPFNDVPIFFTSSFTKKDIIKSIKTAVKITFNLRLRIKTSLLNKIILPILNKNPHPSINGKLITIKYCSQIQTYNPQFIFFTNYPNNIKESYKRFIENNIREKFNFTGIPIKILFRLK</sequence>
<protein>
    <recommendedName>
        <fullName evidence="1">GTPase Der</fullName>
    </recommendedName>
    <alternativeName>
        <fullName evidence="1">GTP-binding protein EngA</fullName>
    </alternativeName>
</protein>
<comment type="function">
    <text evidence="1">GTPase that plays an essential role in the late steps of ribosome biogenesis.</text>
</comment>
<comment type="subunit">
    <text evidence="1">Associates with the 50S ribosomal subunit.</text>
</comment>
<comment type="similarity">
    <text evidence="1">Belongs to the TRAFAC class TrmE-Era-EngA-EngB-Septin-like GTPase superfamily. EngA (Der) GTPase family.</text>
</comment>
<reference key="1">
    <citation type="journal article" date="2007" name="Proc. Natl. Acad. Sci. U.S.A.">
        <title>Parallel genomic evolution and metabolic interdependence in an ancient symbiosis.</title>
        <authorList>
            <person name="McCutcheon J.P."/>
            <person name="Moran N.A."/>
        </authorList>
    </citation>
    <scope>NUCLEOTIDE SEQUENCE [LARGE SCALE GENOMIC DNA]</scope>
    <source>
        <strain>GWSS</strain>
    </source>
</reference>
<feature type="chain" id="PRO_1000099168" description="GTPase Der">
    <location>
        <begin position="1"/>
        <end position="433"/>
    </location>
</feature>
<feature type="domain" description="EngA-type G 1">
    <location>
        <begin position="3"/>
        <end position="167"/>
    </location>
</feature>
<feature type="domain" description="EngA-type G 2">
    <location>
        <begin position="175"/>
        <end position="349"/>
    </location>
</feature>
<feature type="domain" description="KH-like" evidence="1">
    <location>
        <begin position="350"/>
        <end position="433"/>
    </location>
</feature>
<feature type="binding site" evidence="1">
    <location>
        <begin position="9"/>
        <end position="16"/>
    </location>
    <ligand>
        <name>GTP</name>
        <dbReference type="ChEBI" id="CHEBI:37565"/>
        <label>1</label>
    </ligand>
</feature>
<feature type="binding site" evidence="1">
    <location>
        <begin position="56"/>
        <end position="60"/>
    </location>
    <ligand>
        <name>GTP</name>
        <dbReference type="ChEBI" id="CHEBI:37565"/>
        <label>1</label>
    </ligand>
</feature>
<feature type="binding site" evidence="1">
    <location>
        <begin position="119"/>
        <end position="122"/>
    </location>
    <ligand>
        <name>GTP</name>
        <dbReference type="ChEBI" id="CHEBI:37565"/>
        <label>1</label>
    </ligand>
</feature>
<feature type="binding site" evidence="1">
    <location>
        <begin position="181"/>
        <end position="188"/>
    </location>
    <ligand>
        <name>GTP</name>
        <dbReference type="ChEBI" id="CHEBI:37565"/>
        <label>2</label>
    </ligand>
</feature>
<feature type="binding site" evidence="1">
    <location>
        <begin position="228"/>
        <end position="232"/>
    </location>
    <ligand>
        <name>GTP</name>
        <dbReference type="ChEBI" id="CHEBI:37565"/>
        <label>2</label>
    </ligand>
</feature>
<feature type="binding site" evidence="1">
    <location>
        <begin position="293"/>
        <end position="296"/>
    </location>
    <ligand>
        <name>GTP</name>
        <dbReference type="ChEBI" id="CHEBI:37565"/>
        <label>2</label>
    </ligand>
</feature>
<evidence type="ECO:0000255" key="1">
    <source>
        <dbReference type="HAMAP-Rule" id="MF_00195"/>
    </source>
</evidence>
<organism>
    <name type="scientific">Karelsulcia muelleri (strain GWSS)</name>
    <name type="common">Sulcia muelleri</name>
    <dbReference type="NCBI Taxonomy" id="444179"/>
    <lineage>
        <taxon>Bacteria</taxon>
        <taxon>Pseudomonadati</taxon>
        <taxon>Bacteroidota</taxon>
        <taxon>Flavobacteriia</taxon>
        <taxon>Flavobacteriales</taxon>
        <taxon>Candidatus Karelsulcia</taxon>
    </lineage>
</organism>
<dbReference type="EMBL" id="CP000770">
    <property type="protein sequence ID" value="ABS30559.1"/>
    <property type="molecule type" value="Genomic_DNA"/>
</dbReference>
<dbReference type="SMR" id="A8Z608"/>
<dbReference type="STRING" id="444179.SMGWSS_151"/>
<dbReference type="KEGG" id="smg:SMGWSS_151"/>
<dbReference type="HOGENOM" id="CLU_016077_6_2_10"/>
<dbReference type="Proteomes" id="UP000000781">
    <property type="component" value="Chromosome"/>
</dbReference>
<dbReference type="GO" id="GO:0005525">
    <property type="term" value="F:GTP binding"/>
    <property type="evidence" value="ECO:0007669"/>
    <property type="project" value="UniProtKB-UniRule"/>
</dbReference>
<dbReference type="GO" id="GO:0043022">
    <property type="term" value="F:ribosome binding"/>
    <property type="evidence" value="ECO:0007669"/>
    <property type="project" value="TreeGrafter"/>
</dbReference>
<dbReference type="GO" id="GO:0042254">
    <property type="term" value="P:ribosome biogenesis"/>
    <property type="evidence" value="ECO:0007669"/>
    <property type="project" value="UniProtKB-KW"/>
</dbReference>
<dbReference type="CDD" id="cd01894">
    <property type="entry name" value="EngA1"/>
    <property type="match status" value="1"/>
</dbReference>
<dbReference type="CDD" id="cd01895">
    <property type="entry name" value="EngA2"/>
    <property type="match status" value="1"/>
</dbReference>
<dbReference type="FunFam" id="3.30.300.20:FF:000004">
    <property type="entry name" value="GTPase Der"/>
    <property type="match status" value="1"/>
</dbReference>
<dbReference type="FunFam" id="3.40.50.300:FF:000494">
    <property type="entry name" value="tRNA modification GTPase MnmE"/>
    <property type="match status" value="1"/>
</dbReference>
<dbReference type="Gene3D" id="3.30.300.20">
    <property type="match status" value="1"/>
</dbReference>
<dbReference type="Gene3D" id="3.40.50.300">
    <property type="entry name" value="P-loop containing nucleotide triphosphate hydrolases"/>
    <property type="match status" value="2"/>
</dbReference>
<dbReference type="HAMAP" id="MF_00195">
    <property type="entry name" value="GTPase_Der"/>
    <property type="match status" value="1"/>
</dbReference>
<dbReference type="InterPro" id="IPR031166">
    <property type="entry name" value="G_ENGA"/>
</dbReference>
<dbReference type="InterPro" id="IPR006073">
    <property type="entry name" value="GTP-bd"/>
</dbReference>
<dbReference type="InterPro" id="IPR016484">
    <property type="entry name" value="GTPase_Der"/>
</dbReference>
<dbReference type="InterPro" id="IPR032859">
    <property type="entry name" value="KH_dom-like"/>
</dbReference>
<dbReference type="InterPro" id="IPR015946">
    <property type="entry name" value="KH_dom-like_a/b"/>
</dbReference>
<dbReference type="InterPro" id="IPR027417">
    <property type="entry name" value="P-loop_NTPase"/>
</dbReference>
<dbReference type="InterPro" id="IPR005225">
    <property type="entry name" value="Small_GTP-bd"/>
</dbReference>
<dbReference type="NCBIfam" id="TIGR03594">
    <property type="entry name" value="GTPase_EngA"/>
    <property type="match status" value="1"/>
</dbReference>
<dbReference type="NCBIfam" id="TIGR00231">
    <property type="entry name" value="small_GTP"/>
    <property type="match status" value="2"/>
</dbReference>
<dbReference type="PANTHER" id="PTHR43834">
    <property type="entry name" value="GTPASE DER"/>
    <property type="match status" value="1"/>
</dbReference>
<dbReference type="PANTHER" id="PTHR43834:SF6">
    <property type="entry name" value="GTPASE DER"/>
    <property type="match status" value="1"/>
</dbReference>
<dbReference type="Pfam" id="PF14714">
    <property type="entry name" value="KH_dom-like"/>
    <property type="match status" value="1"/>
</dbReference>
<dbReference type="Pfam" id="PF01926">
    <property type="entry name" value="MMR_HSR1"/>
    <property type="match status" value="2"/>
</dbReference>
<dbReference type="PIRSF" id="PIRSF006485">
    <property type="entry name" value="GTP-binding_EngA"/>
    <property type="match status" value="1"/>
</dbReference>
<dbReference type="PRINTS" id="PR00326">
    <property type="entry name" value="GTP1OBG"/>
</dbReference>
<dbReference type="SUPFAM" id="SSF52540">
    <property type="entry name" value="P-loop containing nucleoside triphosphate hydrolases"/>
    <property type="match status" value="2"/>
</dbReference>
<dbReference type="PROSITE" id="PS51712">
    <property type="entry name" value="G_ENGA"/>
    <property type="match status" value="2"/>
</dbReference>